<organism>
    <name type="scientific">Thermobifida fusca (strain YX)</name>
    <dbReference type="NCBI Taxonomy" id="269800"/>
    <lineage>
        <taxon>Bacteria</taxon>
        <taxon>Bacillati</taxon>
        <taxon>Actinomycetota</taxon>
        <taxon>Actinomycetes</taxon>
        <taxon>Streptosporangiales</taxon>
        <taxon>Nocardiopsidaceae</taxon>
        <taxon>Thermobifida</taxon>
    </lineage>
</organism>
<accession>Q47MU8</accession>
<evidence type="ECO:0000255" key="1">
    <source>
        <dbReference type="HAMAP-Rule" id="MF_00451"/>
    </source>
</evidence>
<keyword id="KW-0067">ATP-binding</keyword>
<keyword id="KW-0963">Cytoplasm</keyword>
<keyword id="KW-0418">Kinase</keyword>
<keyword id="KW-0460">Magnesium</keyword>
<keyword id="KW-0479">Metal-binding</keyword>
<keyword id="KW-0546">Nucleotide metabolism</keyword>
<keyword id="KW-0547">Nucleotide-binding</keyword>
<keyword id="KW-0597">Phosphoprotein</keyword>
<keyword id="KW-0808">Transferase</keyword>
<sequence>MERTLVLIKPDGVRRNIIGEVISRIERKGLKIVAMELRTLDEETAKAHYEEHVEKPFFSSLVEFITGGPLVAMVVEGNRAIEAFRSLAGATDPVLAAPGTIRGDYGLDVQANIVHGSDSTYSAEREIKLFFPDLA</sequence>
<name>NDK_THEFY</name>
<proteinExistence type="inferred from homology"/>
<protein>
    <recommendedName>
        <fullName evidence="1">Nucleoside diphosphate kinase</fullName>
        <shortName evidence="1">NDK</shortName>
        <shortName evidence="1">NDP kinase</shortName>
        <ecNumber evidence="1">2.7.4.6</ecNumber>
    </recommendedName>
    <alternativeName>
        <fullName evidence="1">Nucleoside-2-P kinase</fullName>
    </alternativeName>
</protein>
<gene>
    <name evidence="1" type="primary">ndk</name>
    <name type="ordered locus">Tfu_2188</name>
</gene>
<reference key="1">
    <citation type="journal article" date="2007" name="J. Bacteriol.">
        <title>Genome sequence and analysis of the soil cellulolytic actinomycete Thermobifida fusca YX.</title>
        <authorList>
            <person name="Lykidis A."/>
            <person name="Mavromatis K."/>
            <person name="Ivanova N."/>
            <person name="Anderson I."/>
            <person name="Land M."/>
            <person name="DiBartolo G."/>
            <person name="Martinez M."/>
            <person name="Lapidus A."/>
            <person name="Lucas S."/>
            <person name="Copeland A."/>
            <person name="Richardson P."/>
            <person name="Wilson D.B."/>
            <person name="Kyrpides N."/>
        </authorList>
    </citation>
    <scope>NUCLEOTIDE SEQUENCE [LARGE SCALE GENOMIC DNA]</scope>
    <source>
        <strain>YX</strain>
    </source>
</reference>
<comment type="function">
    <text evidence="1">Major role in the synthesis of nucleoside triphosphates other than ATP. The ATP gamma phosphate is transferred to the NDP beta phosphate via a ping-pong mechanism, using a phosphorylated active-site intermediate.</text>
</comment>
<comment type="catalytic activity">
    <reaction evidence="1">
        <text>a 2'-deoxyribonucleoside 5'-diphosphate + ATP = a 2'-deoxyribonucleoside 5'-triphosphate + ADP</text>
        <dbReference type="Rhea" id="RHEA:44640"/>
        <dbReference type="ChEBI" id="CHEBI:30616"/>
        <dbReference type="ChEBI" id="CHEBI:61560"/>
        <dbReference type="ChEBI" id="CHEBI:73316"/>
        <dbReference type="ChEBI" id="CHEBI:456216"/>
        <dbReference type="EC" id="2.7.4.6"/>
    </reaction>
</comment>
<comment type="catalytic activity">
    <reaction evidence="1">
        <text>a ribonucleoside 5'-diphosphate + ATP = a ribonucleoside 5'-triphosphate + ADP</text>
        <dbReference type="Rhea" id="RHEA:18113"/>
        <dbReference type="ChEBI" id="CHEBI:30616"/>
        <dbReference type="ChEBI" id="CHEBI:57930"/>
        <dbReference type="ChEBI" id="CHEBI:61557"/>
        <dbReference type="ChEBI" id="CHEBI:456216"/>
        <dbReference type="EC" id="2.7.4.6"/>
    </reaction>
</comment>
<comment type="cofactor">
    <cofactor evidence="1">
        <name>Mg(2+)</name>
        <dbReference type="ChEBI" id="CHEBI:18420"/>
    </cofactor>
</comment>
<comment type="subunit">
    <text evidence="1">Homotetramer.</text>
</comment>
<comment type="subcellular location">
    <subcellularLocation>
        <location evidence="1">Cytoplasm</location>
    </subcellularLocation>
</comment>
<comment type="similarity">
    <text evidence="1">Belongs to the NDK family.</text>
</comment>
<dbReference type="EC" id="2.7.4.6" evidence="1"/>
<dbReference type="EMBL" id="CP000088">
    <property type="protein sequence ID" value="AAZ56221.1"/>
    <property type="molecule type" value="Genomic_DNA"/>
</dbReference>
<dbReference type="RefSeq" id="WP_011292611.1">
    <property type="nucleotide sequence ID" value="NC_007333.1"/>
</dbReference>
<dbReference type="SMR" id="Q47MU8"/>
<dbReference type="STRING" id="269800.Tfu_2188"/>
<dbReference type="KEGG" id="tfu:Tfu_2188"/>
<dbReference type="eggNOG" id="COG0105">
    <property type="taxonomic scope" value="Bacteria"/>
</dbReference>
<dbReference type="HOGENOM" id="CLU_060216_6_3_11"/>
<dbReference type="OrthoDB" id="9801161at2"/>
<dbReference type="GO" id="GO:0005737">
    <property type="term" value="C:cytoplasm"/>
    <property type="evidence" value="ECO:0007669"/>
    <property type="project" value="UniProtKB-SubCell"/>
</dbReference>
<dbReference type="GO" id="GO:0005524">
    <property type="term" value="F:ATP binding"/>
    <property type="evidence" value="ECO:0007669"/>
    <property type="project" value="UniProtKB-UniRule"/>
</dbReference>
<dbReference type="GO" id="GO:0046872">
    <property type="term" value="F:metal ion binding"/>
    <property type="evidence" value="ECO:0007669"/>
    <property type="project" value="UniProtKB-KW"/>
</dbReference>
<dbReference type="GO" id="GO:0004550">
    <property type="term" value="F:nucleoside diphosphate kinase activity"/>
    <property type="evidence" value="ECO:0007669"/>
    <property type="project" value="UniProtKB-UniRule"/>
</dbReference>
<dbReference type="GO" id="GO:0006241">
    <property type="term" value="P:CTP biosynthetic process"/>
    <property type="evidence" value="ECO:0007669"/>
    <property type="project" value="UniProtKB-UniRule"/>
</dbReference>
<dbReference type="GO" id="GO:0006183">
    <property type="term" value="P:GTP biosynthetic process"/>
    <property type="evidence" value="ECO:0007669"/>
    <property type="project" value="UniProtKB-UniRule"/>
</dbReference>
<dbReference type="GO" id="GO:0006228">
    <property type="term" value="P:UTP biosynthetic process"/>
    <property type="evidence" value="ECO:0007669"/>
    <property type="project" value="UniProtKB-UniRule"/>
</dbReference>
<dbReference type="CDD" id="cd04413">
    <property type="entry name" value="NDPk_I"/>
    <property type="match status" value="1"/>
</dbReference>
<dbReference type="FunFam" id="3.30.70.141:FF:000003">
    <property type="entry name" value="Nucleoside diphosphate kinase"/>
    <property type="match status" value="1"/>
</dbReference>
<dbReference type="Gene3D" id="3.30.70.141">
    <property type="entry name" value="Nucleoside diphosphate kinase-like domain"/>
    <property type="match status" value="1"/>
</dbReference>
<dbReference type="HAMAP" id="MF_00451">
    <property type="entry name" value="NDP_kinase"/>
    <property type="match status" value="1"/>
</dbReference>
<dbReference type="InterPro" id="IPR034907">
    <property type="entry name" value="NDK-like_dom"/>
</dbReference>
<dbReference type="InterPro" id="IPR036850">
    <property type="entry name" value="NDK-like_dom_sf"/>
</dbReference>
<dbReference type="InterPro" id="IPR001564">
    <property type="entry name" value="Nucleoside_diP_kinase"/>
</dbReference>
<dbReference type="NCBIfam" id="NF001908">
    <property type="entry name" value="PRK00668.1"/>
    <property type="match status" value="1"/>
</dbReference>
<dbReference type="PANTHER" id="PTHR11349">
    <property type="entry name" value="NUCLEOSIDE DIPHOSPHATE KINASE"/>
    <property type="match status" value="1"/>
</dbReference>
<dbReference type="Pfam" id="PF00334">
    <property type="entry name" value="NDK"/>
    <property type="match status" value="1"/>
</dbReference>
<dbReference type="PRINTS" id="PR01243">
    <property type="entry name" value="NUCDPKINASE"/>
</dbReference>
<dbReference type="SMART" id="SM00562">
    <property type="entry name" value="NDK"/>
    <property type="match status" value="1"/>
</dbReference>
<dbReference type="SUPFAM" id="SSF54919">
    <property type="entry name" value="Nucleoside diphosphate kinase, NDK"/>
    <property type="match status" value="1"/>
</dbReference>
<dbReference type="PROSITE" id="PS51374">
    <property type="entry name" value="NDPK_LIKE"/>
    <property type="match status" value="1"/>
</dbReference>
<feature type="chain" id="PRO_0000226584" description="Nucleoside diphosphate kinase">
    <location>
        <begin position="1"/>
        <end position="135"/>
    </location>
</feature>
<feature type="active site" description="Pros-phosphohistidine intermediate" evidence="1">
    <location>
        <position position="115"/>
    </location>
</feature>
<feature type="binding site" evidence="1">
    <location>
        <position position="9"/>
    </location>
    <ligand>
        <name>ATP</name>
        <dbReference type="ChEBI" id="CHEBI:30616"/>
    </ligand>
</feature>
<feature type="binding site" evidence="1">
    <location>
        <position position="57"/>
    </location>
    <ligand>
        <name>ATP</name>
        <dbReference type="ChEBI" id="CHEBI:30616"/>
    </ligand>
</feature>
<feature type="binding site" evidence="1">
    <location>
        <position position="85"/>
    </location>
    <ligand>
        <name>ATP</name>
        <dbReference type="ChEBI" id="CHEBI:30616"/>
    </ligand>
</feature>
<feature type="binding site" evidence="1">
    <location>
        <position position="91"/>
    </location>
    <ligand>
        <name>ATP</name>
        <dbReference type="ChEBI" id="CHEBI:30616"/>
    </ligand>
</feature>
<feature type="binding site" evidence="1">
    <location>
        <position position="102"/>
    </location>
    <ligand>
        <name>ATP</name>
        <dbReference type="ChEBI" id="CHEBI:30616"/>
    </ligand>
</feature>
<feature type="binding site" evidence="1">
    <location>
        <position position="112"/>
    </location>
    <ligand>
        <name>ATP</name>
        <dbReference type="ChEBI" id="CHEBI:30616"/>
    </ligand>
</feature>